<reference key="1">
    <citation type="journal article" date="2005" name="Genome Res.">
        <title>Comparative and functional genomic analyses of the pathogenicity of phytopathogen Xanthomonas campestris pv. campestris.</title>
        <authorList>
            <person name="Qian W."/>
            <person name="Jia Y."/>
            <person name="Ren S.-X."/>
            <person name="He Y.-Q."/>
            <person name="Feng J.-X."/>
            <person name="Lu L.-F."/>
            <person name="Sun Q."/>
            <person name="Ying G."/>
            <person name="Tang D.-J."/>
            <person name="Tang H."/>
            <person name="Wu W."/>
            <person name="Hao P."/>
            <person name="Wang L."/>
            <person name="Jiang B.-L."/>
            <person name="Zeng S."/>
            <person name="Gu W.-Y."/>
            <person name="Lu G."/>
            <person name="Rong L."/>
            <person name="Tian Y."/>
            <person name="Yao Z."/>
            <person name="Fu G."/>
            <person name="Chen B."/>
            <person name="Fang R."/>
            <person name="Qiang B."/>
            <person name="Chen Z."/>
            <person name="Zhao G.-P."/>
            <person name="Tang J.-L."/>
            <person name="He C."/>
        </authorList>
    </citation>
    <scope>NUCLEOTIDE SEQUENCE [LARGE SCALE GENOMIC DNA]</scope>
    <source>
        <strain>8004</strain>
    </source>
</reference>
<protein>
    <recommendedName>
        <fullName evidence="1">Dual-action ribosomal maturation protein DarP</fullName>
    </recommendedName>
    <alternativeName>
        <fullName evidence="1">Large ribosomal subunit assembly factor DarP</fullName>
    </alternativeName>
</protein>
<name>DARP_XANC8</name>
<sequence>MRGRDEDTGEFRGASRSQQRREALEIFDLGEKLVALTPAQLAKLPVPESLIPHIEESKRITSHIAHKRQLAFLAKHMRREDDETLDAIRDALDANSDTARREVAAIHRVERWRERLLAEGDVALAELLEAYPAADRQQLRQLVRNAIHERAKNKPPRAYRELFQVLRDLSQKPGLESGDAGLEDEESASENDE</sequence>
<gene>
    <name evidence="1" type="primary">darP</name>
    <name type="ordered locus">XC_1511</name>
</gene>
<keyword id="KW-0963">Cytoplasm</keyword>
<keyword id="KW-0690">Ribosome biogenesis</keyword>
<keyword id="KW-0694">RNA-binding</keyword>
<keyword id="KW-0699">rRNA-binding</keyword>
<feature type="chain" id="PRO_0000257646" description="Dual-action ribosomal maturation protein DarP">
    <location>
        <begin position="1"/>
        <end position="193"/>
    </location>
</feature>
<feature type="region of interest" description="Disordered" evidence="2">
    <location>
        <begin position="1"/>
        <end position="20"/>
    </location>
</feature>
<feature type="region of interest" description="Disordered" evidence="2">
    <location>
        <begin position="170"/>
        <end position="193"/>
    </location>
</feature>
<feature type="compositionally biased region" description="Basic and acidic residues" evidence="2">
    <location>
        <begin position="1"/>
        <end position="10"/>
    </location>
</feature>
<feature type="compositionally biased region" description="Acidic residues" evidence="2">
    <location>
        <begin position="181"/>
        <end position="193"/>
    </location>
</feature>
<comment type="function">
    <text evidence="1">Member of a network of 50S ribosomal subunit biogenesis factors which assembles along the 30S-50S interface, preventing incorrect 23S rRNA structures from forming. Promotes peptidyl transferase center (PTC) maturation.</text>
</comment>
<comment type="subcellular location">
    <subcellularLocation>
        <location evidence="1">Cytoplasm</location>
    </subcellularLocation>
    <text evidence="1">Associates with late stage pre-50S ribosomal subunits.</text>
</comment>
<comment type="similarity">
    <text evidence="1">Belongs to the DarP family.</text>
</comment>
<accession>Q4UWJ4</accession>
<organism>
    <name type="scientific">Xanthomonas campestris pv. campestris (strain 8004)</name>
    <dbReference type="NCBI Taxonomy" id="314565"/>
    <lineage>
        <taxon>Bacteria</taxon>
        <taxon>Pseudomonadati</taxon>
        <taxon>Pseudomonadota</taxon>
        <taxon>Gammaproteobacteria</taxon>
        <taxon>Lysobacterales</taxon>
        <taxon>Lysobacteraceae</taxon>
        <taxon>Xanthomonas</taxon>
    </lineage>
</organism>
<evidence type="ECO:0000255" key="1">
    <source>
        <dbReference type="HAMAP-Rule" id="MF_00765"/>
    </source>
</evidence>
<evidence type="ECO:0000256" key="2">
    <source>
        <dbReference type="SAM" id="MobiDB-lite"/>
    </source>
</evidence>
<dbReference type="EMBL" id="CP000050">
    <property type="protein sequence ID" value="AAY48579.1"/>
    <property type="molecule type" value="Genomic_DNA"/>
</dbReference>
<dbReference type="SMR" id="Q4UWJ4"/>
<dbReference type="KEGG" id="xcb:XC_1511"/>
<dbReference type="HOGENOM" id="CLU_106757_0_0_6"/>
<dbReference type="Proteomes" id="UP000000420">
    <property type="component" value="Chromosome"/>
</dbReference>
<dbReference type="GO" id="GO:0005829">
    <property type="term" value="C:cytosol"/>
    <property type="evidence" value="ECO:0007669"/>
    <property type="project" value="TreeGrafter"/>
</dbReference>
<dbReference type="GO" id="GO:0043022">
    <property type="term" value="F:ribosome binding"/>
    <property type="evidence" value="ECO:0007669"/>
    <property type="project" value="UniProtKB-UniRule"/>
</dbReference>
<dbReference type="GO" id="GO:0019843">
    <property type="term" value="F:rRNA binding"/>
    <property type="evidence" value="ECO:0007669"/>
    <property type="project" value="UniProtKB-UniRule"/>
</dbReference>
<dbReference type="GO" id="GO:1902626">
    <property type="term" value="P:assembly of large subunit precursor of preribosome"/>
    <property type="evidence" value="ECO:0007669"/>
    <property type="project" value="UniProtKB-UniRule"/>
</dbReference>
<dbReference type="CDD" id="cd16331">
    <property type="entry name" value="YjgA-like"/>
    <property type="match status" value="1"/>
</dbReference>
<dbReference type="FunFam" id="1.10.60.30:FF:000002">
    <property type="entry name" value="UPF0307 protein YjgA"/>
    <property type="match status" value="1"/>
</dbReference>
<dbReference type="Gene3D" id="1.10.60.30">
    <property type="entry name" value="PSPTO4464-like domains"/>
    <property type="match status" value="2"/>
</dbReference>
<dbReference type="HAMAP" id="MF_00765">
    <property type="entry name" value="DarP"/>
    <property type="match status" value="1"/>
</dbReference>
<dbReference type="InterPro" id="IPR006839">
    <property type="entry name" value="DarP"/>
</dbReference>
<dbReference type="InterPro" id="IPR023153">
    <property type="entry name" value="DarP_sf"/>
</dbReference>
<dbReference type="NCBIfam" id="NF003593">
    <property type="entry name" value="PRK05255.1-1"/>
    <property type="match status" value="1"/>
</dbReference>
<dbReference type="PANTHER" id="PTHR38101">
    <property type="entry name" value="UPF0307 PROTEIN YJGA"/>
    <property type="match status" value="1"/>
</dbReference>
<dbReference type="PANTHER" id="PTHR38101:SF1">
    <property type="entry name" value="UPF0307 PROTEIN YJGA"/>
    <property type="match status" value="1"/>
</dbReference>
<dbReference type="Pfam" id="PF04751">
    <property type="entry name" value="DarP"/>
    <property type="match status" value="1"/>
</dbReference>
<dbReference type="PIRSF" id="PIRSF016183">
    <property type="entry name" value="UCP016183"/>
    <property type="match status" value="1"/>
</dbReference>
<dbReference type="SUPFAM" id="SSF158710">
    <property type="entry name" value="PSPTO4464-like"/>
    <property type="match status" value="1"/>
</dbReference>
<proteinExistence type="inferred from homology"/>